<keyword id="KW-1185">Reference proteome</keyword>
<feature type="chain" id="PRO_0000099651" description="Uncharacterized 7.9 kDa protein">
    <location>
        <begin position="1"/>
        <end position="73"/>
    </location>
</feature>
<organismHost>
    <name type="scientific">Homo sapiens</name>
    <name type="common">Human</name>
    <dbReference type="NCBI Taxonomy" id="9606"/>
</organismHost>
<reference key="1">
    <citation type="journal article" date="1990" name="Virology">
        <title>The complete DNA sequence of vaccinia virus.</title>
        <authorList>
            <person name="Goebel S.J."/>
            <person name="Johnson G.P."/>
            <person name="Perkus M.E."/>
            <person name="Davis S.W."/>
            <person name="Winslow J.P."/>
            <person name="Paoletti E."/>
        </authorList>
    </citation>
    <scope>NUCLEOTIDE SEQUENCE [LARGE SCALE GENOMIC DNA]</scope>
</reference>
<reference key="2">
    <citation type="journal article" date="1990" name="Virology">
        <title>Appendix to 'The complete DNA sequence of vaccinia virus'.</title>
        <authorList>
            <person name="Goebel S.J."/>
            <person name="Johnson G.P."/>
            <person name="Perkus M.E."/>
            <person name="Davis S.W."/>
            <person name="Winslow J.P."/>
            <person name="Paoletti E."/>
        </authorList>
    </citation>
    <scope>COMPLETE GENOME</scope>
</reference>
<organism>
    <name type="scientific">Vaccinia virus (strain Copenhagen)</name>
    <name type="common">VACV</name>
    <dbReference type="NCBI Taxonomy" id="10249"/>
    <lineage>
        <taxon>Viruses</taxon>
        <taxon>Varidnaviria</taxon>
        <taxon>Bamfordvirae</taxon>
        <taxon>Nucleocytoviricota</taxon>
        <taxon>Pokkesviricetes</taxon>
        <taxon>Chitovirales</taxon>
        <taxon>Poxviridae</taxon>
        <taxon>Chordopoxvirinae</taxon>
        <taxon>Orthopoxvirus</taxon>
        <taxon>Vaccinia virus</taxon>
    </lineage>
</organism>
<proteinExistence type="predicted"/>
<gene>
    <name type="ORF">A ORF J</name>
</gene>
<sequence length="73" mass="7868">MDVSLLLGKQTGRFSPLLLYGLAEYAAVKITSINIDIVFLEKMDVELIMTSGVIPFSSYGSSVSSATYATVPF</sequence>
<protein>
    <recommendedName>
        <fullName>Uncharacterized 7.9 kDa protein</fullName>
    </recommendedName>
</protein>
<name>YVAJ_VACCC</name>
<dbReference type="EMBL" id="M35027">
    <property type="protein sequence ID" value="AAA48149.1"/>
    <property type="molecule type" value="Genomic_DNA"/>
</dbReference>
<dbReference type="PIR" id="F42524">
    <property type="entry name" value="F42524"/>
</dbReference>
<dbReference type="Proteomes" id="UP000008269">
    <property type="component" value="Segment"/>
</dbReference>
<accession>P20519</accession>